<evidence type="ECO:0000255" key="1">
    <source>
        <dbReference type="HAMAP-Rule" id="MF_00575"/>
    </source>
</evidence>
<feature type="chain" id="PRO_1000025094" description="UDP-2,3-diacylglucosamine hydrolase">
    <location>
        <begin position="1"/>
        <end position="239"/>
    </location>
</feature>
<feature type="binding site" evidence="1">
    <location>
        <position position="8"/>
    </location>
    <ligand>
        <name>Mn(2+)</name>
        <dbReference type="ChEBI" id="CHEBI:29035"/>
        <label>1</label>
    </ligand>
</feature>
<feature type="binding site" evidence="1">
    <location>
        <position position="10"/>
    </location>
    <ligand>
        <name>Mn(2+)</name>
        <dbReference type="ChEBI" id="CHEBI:29035"/>
        <label>1</label>
    </ligand>
</feature>
<feature type="binding site" evidence="1">
    <location>
        <position position="41"/>
    </location>
    <ligand>
        <name>Mn(2+)</name>
        <dbReference type="ChEBI" id="CHEBI:29035"/>
        <label>1</label>
    </ligand>
</feature>
<feature type="binding site" evidence="1">
    <location>
        <position position="41"/>
    </location>
    <ligand>
        <name>Mn(2+)</name>
        <dbReference type="ChEBI" id="CHEBI:29035"/>
        <label>2</label>
    </ligand>
</feature>
<feature type="binding site" evidence="1">
    <location>
        <begin position="79"/>
        <end position="80"/>
    </location>
    <ligand>
        <name>substrate</name>
    </ligand>
</feature>
<feature type="binding site" evidence="1">
    <location>
        <position position="79"/>
    </location>
    <ligand>
        <name>Mn(2+)</name>
        <dbReference type="ChEBI" id="CHEBI:29035"/>
        <label>2</label>
    </ligand>
</feature>
<feature type="binding site" evidence="1">
    <location>
        <position position="114"/>
    </location>
    <ligand>
        <name>Mn(2+)</name>
        <dbReference type="ChEBI" id="CHEBI:29035"/>
        <label>2</label>
    </ligand>
</feature>
<feature type="binding site" evidence="1">
    <location>
        <position position="122"/>
    </location>
    <ligand>
        <name>substrate</name>
    </ligand>
</feature>
<feature type="binding site" evidence="1">
    <location>
        <position position="160"/>
    </location>
    <ligand>
        <name>substrate</name>
    </ligand>
</feature>
<feature type="binding site" evidence="1">
    <location>
        <position position="164"/>
    </location>
    <ligand>
        <name>substrate</name>
    </ligand>
</feature>
<feature type="binding site" evidence="1">
    <location>
        <position position="167"/>
    </location>
    <ligand>
        <name>substrate</name>
    </ligand>
</feature>
<feature type="binding site" evidence="1">
    <location>
        <position position="195"/>
    </location>
    <ligand>
        <name>Mn(2+)</name>
        <dbReference type="ChEBI" id="CHEBI:29035"/>
        <label>2</label>
    </ligand>
</feature>
<feature type="binding site" evidence="1">
    <location>
        <position position="195"/>
    </location>
    <ligand>
        <name>substrate</name>
    </ligand>
</feature>
<feature type="binding site" evidence="1">
    <location>
        <position position="197"/>
    </location>
    <ligand>
        <name>Mn(2+)</name>
        <dbReference type="ChEBI" id="CHEBI:29035"/>
        <label>1</label>
    </ligand>
</feature>
<organism>
    <name type="scientific">Sodalis glossinidius (strain morsitans)</name>
    <dbReference type="NCBI Taxonomy" id="343509"/>
    <lineage>
        <taxon>Bacteria</taxon>
        <taxon>Pseudomonadati</taxon>
        <taxon>Pseudomonadota</taxon>
        <taxon>Gammaproteobacteria</taxon>
        <taxon>Enterobacterales</taxon>
        <taxon>Bruguierivoracaceae</taxon>
        <taxon>Sodalis</taxon>
    </lineage>
</organism>
<dbReference type="EC" id="3.6.1.54" evidence="1"/>
<dbReference type="EMBL" id="AP008232">
    <property type="protein sequence ID" value="BAE73978.1"/>
    <property type="molecule type" value="Genomic_DNA"/>
</dbReference>
<dbReference type="RefSeq" id="WP_011410566.1">
    <property type="nucleotide sequence ID" value="NC_007712.1"/>
</dbReference>
<dbReference type="SMR" id="Q2NV47"/>
<dbReference type="STRING" id="343509.SG0703"/>
<dbReference type="KEGG" id="sgl:SG0703"/>
<dbReference type="eggNOG" id="COG2908">
    <property type="taxonomic scope" value="Bacteria"/>
</dbReference>
<dbReference type="HOGENOM" id="CLU_074586_0_0_6"/>
<dbReference type="OrthoDB" id="9783283at2"/>
<dbReference type="UniPathway" id="UPA00359">
    <property type="reaction ID" value="UER00480"/>
</dbReference>
<dbReference type="Proteomes" id="UP000001932">
    <property type="component" value="Chromosome"/>
</dbReference>
<dbReference type="GO" id="GO:0005737">
    <property type="term" value="C:cytoplasm"/>
    <property type="evidence" value="ECO:0007669"/>
    <property type="project" value="InterPro"/>
</dbReference>
<dbReference type="GO" id="GO:0019897">
    <property type="term" value="C:extrinsic component of plasma membrane"/>
    <property type="evidence" value="ECO:0007669"/>
    <property type="project" value="UniProtKB-UniRule"/>
</dbReference>
<dbReference type="GO" id="GO:0030145">
    <property type="term" value="F:manganese ion binding"/>
    <property type="evidence" value="ECO:0007669"/>
    <property type="project" value="UniProtKB-UniRule"/>
</dbReference>
<dbReference type="GO" id="GO:0008758">
    <property type="term" value="F:UDP-2,3-diacylglucosamine hydrolase activity"/>
    <property type="evidence" value="ECO:0007669"/>
    <property type="project" value="UniProtKB-UniRule"/>
</dbReference>
<dbReference type="GO" id="GO:0009245">
    <property type="term" value="P:lipid A biosynthetic process"/>
    <property type="evidence" value="ECO:0007669"/>
    <property type="project" value="UniProtKB-UniRule"/>
</dbReference>
<dbReference type="CDD" id="cd07398">
    <property type="entry name" value="MPP_YbbF-LpxH"/>
    <property type="match status" value="1"/>
</dbReference>
<dbReference type="Gene3D" id="3.60.21.10">
    <property type="match status" value="1"/>
</dbReference>
<dbReference type="HAMAP" id="MF_00575">
    <property type="entry name" value="LpxH"/>
    <property type="match status" value="1"/>
</dbReference>
<dbReference type="InterPro" id="IPR004843">
    <property type="entry name" value="Calcineurin-like_PHP_ApaH"/>
</dbReference>
<dbReference type="InterPro" id="IPR043461">
    <property type="entry name" value="LpxH-like"/>
</dbReference>
<dbReference type="InterPro" id="IPR029052">
    <property type="entry name" value="Metallo-depent_PP-like"/>
</dbReference>
<dbReference type="InterPro" id="IPR010138">
    <property type="entry name" value="UDP-diacylglucosamine_Hdrlase"/>
</dbReference>
<dbReference type="NCBIfam" id="TIGR01854">
    <property type="entry name" value="lipid_A_lpxH"/>
    <property type="match status" value="1"/>
</dbReference>
<dbReference type="NCBIfam" id="NF003743">
    <property type="entry name" value="PRK05340.1"/>
    <property type="match status" value="1"/>
</dbReference>
<dbReference type="PANTHER" id="PTHR34990:SF1">
    <property type="entry name" value="UDP-2,3-DIACYLGLUCOSAMINE HYDROLASE"/>
    <property type="match status" value="1"/>
</dbReference>
<dbReference type="PANTHER" id="PTHR34990">
    <property type="entry name" value="UDP-2,3-DIACYLGLUCOSAMINE HYDROLASE-RELATED"/>
    <property type="match status" value="1"/>
</dbReference>
<dbReference type="Pfam" id="PF00149">
    <property type="entry name" value="Metallophos"/>
    <property type="match status" value="1"/>
</dbReference>
<dbReference type="SUPFAM" id="SSF56300">
    <property type="entry name" value="Metallo-dependent phosphatases"/>
    <property type="match status" value="1"/>
</dbReference>
<sequence length="239" mass="26812">MSTLFVADIHLCAQEPAITAGFLHFLRTRAIAAQALYILGDLFEVWIGDDDPNPLHHEIAVALQALTQRGIPCYFIHGNRDFLLGKRYAAACGITLLPAQRVMQLDELRVVILHGDTLCTDDNDYQRFRRRVHQRWLQRLFLSLPLQLRLRIADRMRANSLRANAGKTADIMDINAQAVMAVMDDTGATVMIHGHTHRPAIHQLPGERRRAVLGAWHHQGSAIEVSTSGVMLHEFSFGG</sequence>
<keyword id="KW-0997">Cell inner membrane</keyword>
<keyword id="KW-1003">Cell membrane</keyword>
<keyword id="KW-0378">Hydrolase</keyword>
<keyword id="KW-0441">Lipid A biosynthesis</keyword>
<keyword id="KW-0444">Lipid biosynthesis</keyword>
<keyword id="KW-0443">Lipid metabolism</keyword>
<keyword id="KW-0464">Manganese</keyword>
<keyword id="KW-0472">Membrane</keyword>
<keyword id="KW-0479">Metal-binding</keyword>
<comment type="function">
    <text evidence="1">Hydrolyzes the pyrophosphate bond of UDP-2,3-diacylglucosamine to yield 2,3-diacylglucosamine 1-phosphate (lipid X) and UMP by catalyzing the attack of water at the alpha-P atom. Involved in the biosynthesis of lipid A, a phosphorylated glycolipid that anchors the lipopolysaccharide to the outer membrane of the cell.</text>
</comment>
<comment type="catalytic activity">
    <reaction evidence="1">
        <text>UDP-2-N,3-O-bis[(3R)-3-hydroxytetradecanoyl]-alpha-D-glucosamine + H2O = 2-N,3-O-bis[(3R)-3-hydroxytetradecanoyl]-alpha-D-glucosaminyl 1-phosphate + UMP + 2 H(+)</text>
        <dbReference type="Rhea" id="RHEA:25213"/>
        <dbReference type="ChEBI" id="CHEBI:15377"/>
        <dbReference type="ChEBI" id="CHEBI:15378"/>
        <dbReference type="ChEBI" id="CHEBI:57865"/>
        <dbReference type="ChEBI" id="CHEBI:57957"/>
        <dbReference type="ChEBI" id="CHEBI:78847"/>
        <dbReference type="EC" id="3.6.1.54"/>
    </reaction>
</comment>
<comment type="cofactor">
    <cofactor evidence="1">
        <name>Mn(2+)</name>
        <dbReference type="ChEBI" id="CHEBI:29035"/>
    </cofactor>
    <text evidence="1">Binds 2 Mn(2+) ions per subunit in a binuclear metal center.</text>
</comment>
<comment type="pathway">
    <text evidence="1">Glycolipid biosynthesis; lipid IV(A) biosynthesis; lipid IV(A) from (3R)-3-hydroxytetradecanoyl-[acyl-carrier-protein] and UDP-N-acetyl-alpha-D-glucosamine: step 4/6.</text>
</comment>
<comment type="subcellular location">
    <subcellularLocation>
        <location evidence="1">Cell inner membrane</location>
        <topology evidence="1">Peripheral membrane protein</topology>
        <orientation evidence="1">Cytoplasmic side</orientation>
    </subcellularLocation>
</comment>
<comment type="similarity">
    <text evidence="1">Belongs to the LpxH family.</text>
</comment>
<name>LPXH_SODGM</name>
<proteinExistence type="inferred from homology"/>
<gene>
    <name evidence="1" type="primary">lpxH</name>
    <name type="ordered locus">SG0703</name>
</gene>
<protein>
    <recommendedName>
        <fullName evidence="1">UDP-2,3-diacylglucosamine hydrolase</fullName>
        <ecNumber evidence="1">3.6.1.54</ecNumber>
    </recommendedName>
    <alternativeName>
        <fullName evidence="1">UDP-2,3-diacylglucosamine diphosphatase</fullName>
    </alternativeName>
</protein>
<accession>Q2NV47</accession>
<reference key="1">
    <citation type="journal article" date="2006" name="Genome Res.">
        <title>Massive genome erosion and functional adaptations provide insights into the symbiotic lifestyle of Sodalis glossinidius in the tsetse host.</title>
        <authorList>
            <person name="Toh H."/>
            <person name="Weiss B.L."/>
            <person name="Perkin S.A.H."/>
            <person name="Yamashita A."/>
            <person name="Oshima K."/>
            <person name="Hattori M."/>
            <person name="Aksoy S."/>
        </authorList>
    </citation>
    <scope>NUCLEOTIDE SEQUENCE [LARGE SCALE GENOMIC DNA]</scope>
    <source>
        <strain>morsitans</strain>
    </source>
</reference>